<name>ACCA_YERPN</name>
<comment type="function">
    <text evidence="1">Component of the acetyl coenzyme A carboxylase (ACC) complex. First, biotin carboxylase catalyzes the carboxylation of biotin on its carrier protein (BCCP) and then the CO(2) group is transferred by the carboxyltransferase to acetyl-CoA to form malonyl-CoA.</text>
</comment>
<comment type="catalytic activity">
    <reaction evidence="1">
        <text>N(6)-carboxybiotinyl-L-lysyl-[protein] + acetyl-CoA = N(6)-biotinyl-L-lysyl-[protein] + malonyl-CoA</text>
        <dbReference type="Rhea" id="RHEA:54728"/>
        <dbReference type="Rhea" id="RHEA-COMP:10505"/>
        <dbReference type="Rhea" id="RHEA-COMP:10506"/>
        <dbReference type="ChEBI" id="CHEBI:57288"/>
        <dbReference type="ChEBI" id="CHEBI:57384"/>
        <dbReference type="ChEBI" id="CHEBI:83144"/>
        <dbReference type="ChEBI" id="CHEBI:83145"/>
        <dbReference type="EC" id="2.1.3.15"/>
    </reaction>
</comment>
<comment type="pathway">
    <text evidence="1">Lipid metabolism; malonyl-CoA biosynthesis; malonyl-CoA from acetyl-CoA: step 1/1.</text>
</comment>
<comment type="subunit">
    <text evidence="1">Acetyl-CoA carboxylase is a heterohexamer composed of biotin carboxyl carrier protein (AccB), biotin carboxylase (AccC) and two subunits each of ACCase subunit alpha (AccA) and ACCase subunit beta (AccD).</text>
</comment>
<comment type="subcellular location">
    <subcellularLocation>
        <location evidence="1">Cytoplasm</location>
    </subcellularLocation>
</comment>
<comment type="similarity">
    <text evidence="1">Belongs to the AccA family.</text>
</comment>
<reference key="1">
    <citation type="journal article" date="2006" name="J. Bacteriol.">
        <title>Complete genome sequence of Yersinia pestis strains Antiqua and Nepal516: evidence of gene reduction in an emerging pathogen.</title>
        <authorList>
            <person name="Chain P.S.G."/>
            <person name="Hu P."/>
            <person name="Malfatti S.A."/>
            <person name="Radnedge L."/>
            <person name="Larimer F."/>
            <person name="Vergez L.M."/>
            <person name="Worsham P."/>
            <person name="Chu M.C."/>
            <person name="Andersen G.L."/>
        </authorList>
    </citation>
    <scope>NUCLEOTIDE SEQUENCE [LARGE SCALE GENOMIC DNA]</scope>
    <source>
        <strain>Nepal516</strain>
    </source>
</reference>
<reference key="2">
    <citation type="submission" date="2009-04" db="EMBL/GenBank/DDBJ databases">
        <title>Yersinia pestis Nepal516A whole genome shotgun sequencing project.</title>
        <authorList>
            <person name="Plunkett G. III"/>
            <person name="Anderson B.D."/>
            <person name="Baumler D.J."/>
            <person name="Burland V."/>
            <person name="Cabot E.L."/>
            <person name="Glasner J.D."/>
            <person name="Mau B."/>
            <person name="Neeno-Eckwall E."/>
            <person name="Perna N.T."/>
            <person name="Munk A.C."/>
            <person name="Tapia R."/>
            <person name="Green L.D."/>
            <person name="Rogers Y.C."/>
            <person name="Detter J.C."/>
            <person name="Bruce D.C."/>
            <person name="Brettin T.S."/>
        </authorList>
    </citation>
    <scope>NUCLEOTIDE SEQUENCE [LARGE SCALE GENOMIC DNA]</scope>
    <source>
        <strain>Nepal516</strain>
    </source>
</reference>
<gene>
    <name evidence="1" type="primary">accA</name>
    <name type="ordered locus">YPN_2940</name>
    <name type="ORF">YP516_3330</name>
</gene>
<sequence length="319" mass="35496">MSLNFLDFEQPIAELEAKIDSLTAVSRQDEKLDINLDEEVQRLREKSVELTRKIFSDLGAWQIAQLARHPRRPYTLDYIANIFTDFEELAGDRAYADDKAIVGGIARLDGRPVMIIGHQKGRETKEKIRRNFGMPAPEGYRKALRLMEMAERFKLPIITFIDTPGAYPGVGAEERGQSEAIARNLREMSRLNVPIVCTVIGEGGSGGALAIGVGDKVNMLQYSTYSVISPEGCASILWKSADKAPLAAEAMGITAHRLKELKMIDSVIPEPLGGAHRDYAAIAISLKAQLLADLNDLDVLNDEELLNRRYQRLMNYGYC</sequence>
<proteinExistence type="inferred from homology"/>
<feature type="chain" id="PRO_1000062702" description="Acetyl-coenzyme A carboxylase carboxyl transferase subunit alpha">
    <location>
        <begin position="1"/>
        <end position="319"/>
    </location>
</feature>
<feature type="domain" description="CoA carboxyltransferase C-terminal" evidence="2">
    <location>
        <begin position="35"/>
        <end position="296"/>
    </location>
</feature>
<evidence type="ECO:0000255" key="1">
    <source>
        <dbReference type="HAMAP-Rule" id="MF_00823"/>
    </source>
</evidence>
<evidence type="ECO:0000255" key="2">
    <source>
        <dbReference type="PROSITE-ProRule" id="PRU01137"/>
    </source>
</evidence>
<organism>
    <name type="scientific">Yersinia pestis bv. Antiqua (strain Nepal516)</name>
    <dbReference type="NCBI Taxonomy" id="377628"/>
    <lineage>
        <taxon>Bacteria</taxon>
        <taxon>Pseudomonadati</taxon>
        <taxon>Pseudomonadota</taxon>
        <taxon>Gammaproteobacteria</taxon>
        <taxon>Enterobacterales</taxon>
        <taxon>Yersiniaceae</taxon>
        <taxon>Yersinia</taxon>
    </lineage>
</organism>
<dbReference type="EC" id="2.1.3.15" evidence="1"/>
<dbReference type="EMBL" id="CP000305">
    <property type="protein sequence ID" value="ABG19267.1"/>
    <property type="molecule type" value="Genomic_DNA"/>
</dbReference>
<dbReference type="EMBL" id="ACNQ01000017">
    <property type="protein sequence ID" value="EEO75416.1"/>
    <property type="molecule type" value="Genomic_DNA"/>
</dbReference>
<dbReference type="RefSeq" id="WP_002212147.1">
    <property type="nucleotide sequence ID" value="NZ_ACNQ01000017.1"/>
</dbReference>
<dbReference type="SMR" id="Q1CFG3"/>
<dbReference type="GeneID" id="57977501"/>
<dbReference type="KEGG" id="ypn:YPN_2940"/>
<dbReference type="HOGENOM" id="CLU_015486_0_2_6"/>
<dbReference type="UniPathway" id="UPA00655">
    <property type="reaction ID" value="UER00711"/>
</dbReference>
<dbReference type="Proteomes" id="UP000008936">
    <property type="component" value="Chromosome"/>
</dbReference>
<dbReference type="GO" id="GO:0009317">
    <property type="term" value="C:acetyl-CoA carboxylase complex"/>
    <property type="evidence" value="ECO:0007669"/>
    <property type="project" value="InterPro"/>
</dbReference>
<dbReference type="GO" id="GO:0003989">
    <property type="term" value="F:acetyl-CoA carboxylase activity"/>
    <property type="evidence" value="ECO:0007669"/>
    <property type="project" value="InterPro"/>
</dbReference>
<dbReference type="GO" id="GO:0005524">
    <property type="term" value="F:ATP binding"/>
    <property type="evidence" value="ECO:0007669"/>
    <property type="project" value="UniProtKB-KW"/>
</dbReference>
<dbReference type="GO" id="GO:0016743">
    <property type="term" value="F:carboxyl- or carbamoyltransferase activity"/>
    <property type="evidence" value="ECO:0007669"/>
    <property type="project" value="UniProtKB-UniRule"/>
</dbReference>
<dbReference type="GO" id="GO:0006633">
    <property type="term" value="P:fatty acid biosynthetic process"/>
    <property type="evidence" value="ECO:0007669"/>
    <property type="project" value="UniProtKB-KW"/>
</dbReference>
<dbReference type="GO" id="GO:2001295">
    <property type="term" value="P:malonyl-CoA biosynthetic process"/>
    <property type="evidence" value="ECO:0007669"/>
    <property type="project" value="UniProtKB-UniRule"/>
</dbReference>
<dbReference type="FunFam" id="3.90.226.10:FF:000008">
    <property type="entry name" value="Acetyl-coenzyme A carboxylase carboxyl transferase subunit alpha"/>
    <property type="match status" value="1"/>
</dbReference>
<dbReference type="Gene3D" id="3.90.226.10">
    <property type="entry name" value="2-enoyl-CoA Hydratase, Chain A, domain 1"/>
    <property type="match status" value="1"/>
</dbReference>
<dbReference type="HAMAP" id="MF_00823">
    <property type="entry name" value="AcetylCoA_CT_alpha"/>
    <property type="match status" value="1"/>
</dbReference>
<dbReference type="InterPro" id="IPR001095">
    <property type="entry name" value="Acetyl_CoA_COase_a_su"/>
</dbReference>
<dbReference type="InterPro" id="IPR029045">
    <property type="entry name" value="ClpP/crotonase-like_dom_sf"/>
</dbReference>
<dbReference type="InterPro" id="IPR011763">
    <property type="entry name" value="COA_CT_C"/>
</dbReference>
<dbReference type="NCBIfam" id="TIGR00513">
    <property type="entry name" value="accA"/>
    <property type="match status" value="1"/>
</dbReference>
<dbReference type="NCBIfam" id="NF041504">
    <property type="entry name" value="AccA_sub"/>
    <property type="match status" value="1"/>
</dbReference>
<dbReference type="NCBIfam" id="NF004344">
    <property type="entry name" value="PRK05724.1"/>
    <property type="match status" value="1"/>
</dbReference>
<dbReference type="PANTHER" id="PTHR42853">
    <property type="entry name" value="ACETYL-COENZYME A CARBOXYLASE CARBOXYL TRANSFERASE SUBUNIT ALPHA"/>
    <property type="match status" value="1"/>
</dbReference>
<dbReference type="PANTHER" id="PTHR42853:SF3">
    <property type="entry name" value="ACETYL-COENZYME A CARBOXYLASE CARBOXYL TRANSFERASE SUBUNIT ALPHA, CHLOROPLASTIC"/>
    <property type="match status" value="1"/>
</dbReference>
<dbReference type="Pfam" id="PF03255">
    <property type="entry name" value="ACCA"/>
    <property type="match status" value="1"/>
</dbReference>
<dbReference type="PRINTS" id="PR01069">
    <property type="entry name" value="ACCCTRFRASEA"/>
</dbReference>
<dbReference type="SUPFAM" id="SSF52096">
    <property type="entry name" value="ClpP/crotonase"/>
    <property type="match status" value="1"/>
</dbReference>
<dbReference type="PROSITE" id="PS50989">
    <property type="entry name" value="COA_CT_CTER"/>
    <property type="match status" value="1"/>
</dbReference>
<accession>Q1CFG3</accession>
<accession>C4GWW6</accession>
<protein>
    <recommendedName>
        <fullName evidence="1">Acetyl-coenzyme A carboxylase carboxyl transferase subunit alpha</fullName>
        <shortName evidence="1">ACCase subunit alpha</shortName>
        <shortName evidence="1">Acetyl-CoA carboxylase carboxyltransferase subunit alpha</shortName>
        <ecNumber evidence="1">2.1.3.15</ecNumber>
    </recommendedName>
</protein>
<keyword id="KW-0067">ATP-binding</keyword>
<keyword id="KW-0963">Cytoplasm</keyword>
<keyword id="KW-0275">Fatty acid biosynthesis</keyword>
<keyword id="KW-0276">Fatty acid metabolism</keyword>
<keyword id="KW-0444">Lipid biosynthesis</keyword>
<keyword id="KW-0443">Lipid metabolism</keyword>
<keyword id="KW-0547">Nucleotide-binding</keyword>
<keyword id="KW-0808">Transferase</keyword>